<evidence type="ECO:0000255" key="1">
    <source>
        <dbReference type="HAMAP-Rule" id="MF_00195"/>
    </source>
</evidence>
<reference key="1">
    <citation type="journal article" date="2004" name="Proc. Natl. Acad. Sci. U.S.A.">
        <title>Genome sequence of the deep-sea gamma-proteobacterium Idiomarina loihiensis reveals amino acid fermentation as a source of carbon and energy.</title>
        <authorList>
            <person name="Hou S."/>
            <person name="Saw J.H."/>
            <person name="Lee K.S."/>
            <person name="Freitas T.A."/>
            <person name="Belisle C."/>
            <person name="Kawarabayasi Y."/>
            <person name="Donachie S.P."/>
            <person name="Pikina A."/>
            <person name="Galperin M.Y."/>
            <person name="Koonin E.V."/>
            <person name="Makarova K.S."/>
            <person name="Omelchenko M.V."/>
            <person name="Sorokin A."/>
            <person name="Wolf Y.I."/>
            <person name="Li Q.X."/>
            <person name="Keum Y.S."/>
            <person name="Campbell S."/>
            <person name="Denery J."/>
            <person name="Aizawa S."/>
            <person name="Shibata S."/>
            <person name="Malahoff A."/>
            <person name="Alam M."/>
        </authorList>
    </citation>
    <scope>NUCLEOTIDE SEQUENCE [LARGE SCALE GENOMIC DNA]</scope>
    <source>
        <strain>ATCC BAA-735 / DSM 15497 / L2-TR</strain>
    </source>
</reference>
<protein>
    <recommendedName>
        <fullName evidence="1">GTPase Der</fullName>
    </recommendedName>
    <alternativeName>
        <fullName evidence="1">GTP-binding protein EngA</fullName>
    </alternativeName>
</protein>
<proteinExistence type="inferred from homology"/>
<sequence length="479" mass="53824">MLPVVALVGRPNVGKSTLFNRLTRTRDALVADFPGLTRDRKYGQANYDGYQFIVIDTGGIHGDEEGIDEEMAKQSLLAVDEADVVLFMVDARDGVTVGDQAIADHLRKQNKKVYLVCNKIDGIDAHSAMADFYSLSLGELYGIAAAHGRGVEQLLEICFKPIAEEYPDVIVPKDVASEELEHDEIDYDKLPLKLAIVGRPNVGKSTLINRILGEERVVVYDMPGTTRDSVYIPMQRNEREYVLIDTAGVRRRGRIGEAIEKFSVVKTLQAIEDANVVLIVVDARETISDQDLNLIGFALNAGRSIVIAVNKWDGLQNDHKEEIKRELDRRLGFVDFARLHFISALHGTGVGHLFESVEEAYASATQRISTSKLTKIMEMAQEEHQPPLVSGRRVKLKYAHAGGYNPPRIIIHGNQVKDLPGAYQRYLINYFRKSLGVMGTPIKVEFREPVNPYEGKKNQLTLSQQRKRRRLMKFLKKKK</sequence>
<gene>
    <name evidence="1" type="primary">der</name>
    <name type="synonym">engA</name>
    <name type="ordered locus">IL2030</name>
</gene>
<comment type="function">
    <text evidence="1">GTPase that plays an essential role in the late steps of ribosome biogenesis.</text>
</comment>
<comment type="subunit">
    <text evidence="1">Associates with the 50S ribosomal subunit.</text>
</comment>
<comment type="similarity">
    <text evidence="1">Belongs to the TRAFAC class TrmE-Era-EngA-EngB-Septin-like GTPase superfamily. EngA (Der) GTPase family.</text>
</comment>
<keyword id="KW-0342">GTP-binding</keyword>
<keyword id="KW-0547">Nucleotide-binding</keyword>
<keyword id="KW-1185">Reference proteome</keyword>
<keyword id="KW-0677">Repeat</keyword>
<keyword id="KW-0690">Ribosome biogenesis</keyword>
<dbReference type="EMBL" id="AE017340">
    <property type="protein sequence ID" value="AAV82862.1"/>
    <property type="molecule type" value="Genomic_DNA"/>
</dbReference>
<dbReference type="RefSeq" id="WP_011235258.1">
    <property type="nucleotide sequence ID" value="NC_006512.1"/>
</dbReference>
<dbReference type="SMR" id="Q5QYB3"/>
<dbReference type="STRING" id="283942.IL2030"/>
<dbReference type="GeneID" id="41337220"/>
<dbReference type="KEGG" id="ilo:IL2030"/>
<dbReference type="eggNOG" id="COG1160">
    <property type="taxonomic scope" value="Bacteria"/>
</dbReference>
<dbReference type="HOGENOM" id="CLU_016077_6_2_6"/>
<dbReference type="OrthoDB" id="9805918at2"/>
<dbReference type="Proteomes" id="UP000001171">
    <property type="component" value="Chromosome"/>
</dbReference>
<dbReference type="GO" id="GO:0016887">
    <property type="term" value="F:ATP hydrolysis activity"/>
    <property type="evidence" value="ECO:0007669"/>
    <property type="project" value="InterPro"/>
</dbReference>
<dbReference type="GO" id="GO:0005525">
    <property type="term" value="F:GTP binding"/>
    <property type="evidence" value="ECO:0007669"/>
    <property type="project" value="UniProtKB-UniRule"/>
</dbReference>
<dbReference type="GO" id="GO:0043022">
    <property type="term" value="F:ribosome binding"/>
    <property type="evidence" value="ECO:0007669"/>
    <property type="project" value="TreeGrafter"/>
</dbReference>
<dbReference type="GO" id="GO:0042254">
    <property type="term" value="P:ribosome biogenesis"/>
    <property type="evidence" value="ECO:0007669"/>
    <property type="project" value="UniProtKB-KW"/>
</dbReference>
<dbReference type="CDD" id="cd01894">
    <property type="entry name" value="EngA1"/>
    <property type="match status" value="1"/>
</dbReference>
<dbReference type="CDD" id="cd01895">
    <property type="entry name" value="EngA2"/>
    <property type="match status" value="1"/>
</dbReference>
<dbReference type="FunFam" id="3.30.300.20:FF:000004">
    <property type="entry name" value="GTPase Der"/>
    <property type="match status" value="1"/>
</dbReference>
<dbReference type="FunFam" id="3.40.50.300:FF:000040">
    <property type="entry name" value="GTPase Der"/>
    <property type="match status" value="1"/>
</dbReference>
<dbReference type="FunFam" id="3.40.50.300:FF:000057">
    <property type="entry name" value="GTPase Der"/>
    <property type="match status" value="1"/>
</dbReference>
<dbReference type="Gene3D" id="3.30.300.20">
    <property type="match status" value="1"/>
</dbReference>
<dbReference type="Gene3D" id="3.40.50.300">
    <property type="entry name" value="P-loop containing nucleotide triphosphate hydrolases"/>
    <property type="match status" value="2"/>
</dbReference>
<dbReference type="HAMAP" id="MF_00195">
    <property type="entry name" value="GTPase_Der"/>
    <property type="match status" value="1"/>
</dbReference>
<dbReference type="InterPro" id="IPR003593">
    <property type="entry name" value="AAA+_ATPase"/>
</dbReference>
<dbReference type="InterPro" id="IPR031166">
    <property type="entry name" value="G_ENGA"/>
</dbReference>
<dbReference type="InterPro" id="IPR006073">
    <property type="entry name" value="GTP-bd"/>
</dbReference>
<dbReference type="InterPro" id="IPR016484">
    <property type="entry name" value="GTPase_Der"/>
</dbReference>
<dbReference type="InterPro" id="IPR032859">
    <property type="entry name" value="KH_dom-like"/>
</dbReference>
<dbReference type="InterPro" id="IPR015946">
    <property type="entry name" value="KH_dom-like_a/b"/>
</dbReference>
<dbReference type="InterPro" id="IPR027417">
    <property type="entry name" value="P-loop_NTPase"/>
</dbReference>
<dbReference type="InterPro" id="IPR005225">
    <property type="entry name" value="Small_GTP-bd"/>
</dbReference>
<dbReference type="NCBIfam" id="TIGR03594">
    <property type="entry name" value="GTPase_EngA"/>
    <property type="match status" value="1"/>
</dbReference>
<dbReference type="NCBIfam" id="TIGR00231">
    <property type="entry name" value="small_GTP"/>
    <property type="match status" value="2"/>
</dbReference>
<dbReference type="PANTHER" id="PTHR43834">
    <property type="entry name" value="GTPASE DER"/>
    <property type="match status" value="1"/>
</dbReference>
<dbReference type="PANTHER" id="PTHR43834:SF6">
    <property type="entry name" value="GTPASE DER"/>
    <property type="match status" value="1"/>
</dbReference>
<dbReference type="Pfam" id="PF14714">
    <property type="entry name" value="KH_dom-like"/>
    <property type="match status" value="1"/>
</dbReference>
<dbReference type="Pfam" id="PF01926">
    <property type="entry name" value="MMR_HSR1"/>
    <property type="match status" value="2"/>
</dbReference>
<dbReference type="PIRSF" id="PIRSF006485">
    <property type="entry name" value="GTP-binding_EngA"/>
    <property type="match status" value="1"/>
</dbReference>
<dbReference type="PRINTS" id="PR00326">
    <property type="entry name" value="GTP1OBG"/>
</dbReference>
<dbReference type="SMART" id="SM00382">
    <property type="entry name" value="AAA"/>
    <property type="match status" value="2"/>
</dbReference>
<dbReference type="SUPFAM" id="SSF52540">
    <property type="entry name" value="P-loop containing nucleoside triphosphate hydrolases"/>
    <property type="match status" value="2"/>
</dbReference>
<dbReference type="PROSITE" id="PS51712">
    <property type="entry name" value="G_ENGA"/>
    <property type="match status" value="2"/>
</dbReference>
<accession>Q5QYB3</accession>
<feature type="chain" id="PRO_1000011640" description="GTPase Der">
    <location>
        <begin position="1"/>
        <end position="479"/>
    </location>
</feature>
<feature type="domain" description="EngA-type G 1">
    <location>
        <begin position="3"/>
        <end position="166"/>
    </location>
</feature>
<feature type="domain" description="EngA-type G 2">
    <location>
        <begin position="192"/>
        <end position="365"/>
    </location>
</feature>
<feature type="domain" description="KH-like" evidence="1">
    <location>
        <begin position="366"/>
        <end position="450"/>
    </location>
</feature>
<feature type="binding site" evidence="1">
    <location>
        <begin position="9"/>
        <end position="16"/>
    </location>
    <ligand>
        <name>GTP</name>
        <dbReference type="ChEBI" id="CHEBI:37565"/>
        <label>1</label>
    </ligand>
</feature>
<feature type="binding site" evidence="1">
    <location>
        <begin position="56"/>
        <end position="60"/>
    </location>
    <ligand>
        <name>GTP</name>
        <dbReference type="ChEBI" id="CHEBI:37565"/>
        <label>1</label>
    </ligand>
</feature>
<feature type="binding site" evidence="1">
    <location>
        <begin position="118"/>
        <end position="121"/>
    </location>
    <ligand>
        <name>GTP</name>
        <dbReference type="ChEBI" id="CHEBI:37565"/>
        <label>1</label>
    </ligand>
</feature>
<feature type="binding site" evidence="1">
    <location>
        <begin position="198"/>
        <end position="205"/>
    </location>
    <ligand>
        <name>GTP</name>
        <dbReference type="ChEBI" id="CHEBI:37565"/>
        <label>2</label>
    </ligand>
</feature>
<feature type="binding site" evidence="1">
    <location>
        <begin position="245"/>
        <end position="249"/>
    </location>
    <ligand>
        <name>GTP</name>
        <dbReference type="ChEBI" id="CHEBI:37565"/>
        <label>2</label>
    </ligand>
</feature>
<feature type="binding site" evidence="1">
    <location>
        <begin position="310"/>
        <end position="313"/>
    </location>
    <ligand>
        <name>GTP</name>
        <dbReference type="ChEBI" id="CHEBI:37565"/>
        <label>2</label>
    </ligand>
</feature>
<organism>
    <name type="scientific">Idiomarina loihiensis (strain ATCC BAA-735 / DSM 15497 / L2-TR)</name>
    <dbReference type="NCBI Taxonomy" id="283942"/>
    <lineage>
        <taxon>Bacteria</taxon>
        <taxon>Pseudomonadati</taxon>
        <taxon>Pseudomonadota</taxon>
        <taxon>Gammaproteobacteria</taxon>
        <taxon>Alteromonadales</taxon>
        <taxon>Idiomarinaceae</taxon>
        <taxon>Idiomarina</taxon>
    </lineage>
</organism>
<name>DER_IDILO</name>